<keyword id="KW-1003">Cell membrane</keyword>
<keyword id="KW-0472">Membrane</keyword>
<keyword id="KW-0677">Repeat</keyword>
<keyword id="KW-0346">Stress response</keyword>
<keyword id="KW-0764">Sulfate transport</keyword>
<keyword id="KW-0769">Symport</keyword>
<keyword id="KW-0812">Transmembrane</keyword>
<keyword id="KW-1133">Transmembrane helix</keyword>
<keyword id="KW-0813">Transport</keyword>
<reference key="1">
    <citation type="journal article" date="2010" name="Plant Physiol.">
        <title>Identification and regulation of plasma membrane sulfate transporters in Chlamydomonas.</title>
        <authorList>
            <person name="Pootakham W."/>
            <person name="Gonzalez-Ballester D."/>
            <person name="Grossman A.R."/>
        </authorList>
    </citation>
    <scope>NUCLEOTIDE SEQUENCE [MRNA]</scope>
    <scope>FUNCTION</scope>
    <scope>INDUCTION BY SULFUR</scope>
    <scope>SUBCELLULAR LOCATION</scope>
    <scope>DISRUPTION PHENOTYPE</scope>
</reference>
<reference key="2">
    <citation type="journal article" date="2007" name="Science">
        <title>The Chlamydomonas genome reveals the evolution of key animal and plant functions.</title>
        <authorList>
            <person name="Merchant S.S."/>
            <person name="Prochnik S.E."/>
            <person name="Vallon O."/>
            <person name="Harris E.H."/>
            <person name="Karpowicz S.J."/>
            <person name="Witman G.B."/>
            <person name="Terry A."/>
            <person name="Salamov A."/>
            <person name="Fritz-Laylin L.K."/>
            <person name="Marechal-Drouard L."/>
            <person name="Marshall W.F."/>
            <person name="Qu L.H."/>
            <person name="Nelson D.R."/>
            <person name="Sanderfoot A.A."/>
            <person name="Spalding M.H."/>
            <person name="Kapitonov V.V."/>
            <person name="Ren Q."/>
            <person name="Ferris P."/>
            <person name="Lindquist E."/>
            <person name="Shapiro H."/>
            <person name="Lucas S.M."/>
            <person name="Grimwood J."/>
            <person name="Schmutz J."/>
            <person name="Cardol P."/>
            <person name="Cerutti H."/>
            <person name="Chanfreau G."/>
            <person name="Chen C.L."/>
            <person name="Cognat V."/>
            <person name="Croft M.T."/>
            <person name="Dent R."/>
            <person name="Dutcher S."/>
            <person name="Fernandez E."/>
            <person name="Fukuzawa H."/>
            <person name="Gonzalez-Ballester D."/>
            <person name="Gonzalez-Halphen D."/>
            <person name="Hallmann A."/>
            <person name="Hanikenne M."/>
            <person name="Hippler M."/>
            <person name="Inwood W."/>
            <person name="Jabbari K."/>
            <person name="Kalanon M."/>
            <person name="Kuras R."/>
            <person name="Lefebvre P.A."/>
            <person name="Lemaire S.D."/>
            <person name="Lobanov A.V."/>
            <person name="Lohr M."/>
            <person name="Manuell A."/>
            <person name="Meier I."/>
            <person name="Mets L."/>
            <person name="Mittag M."/>
            <person name="Mittelmeier T."/>
            <person name="Moroney J.V."/>
            <person name="Moseley J."/>
            <person name="Napoli C."/>
            <person name="Nedelcu A.M."/>
            <person name="Niyogi K."/>
            <person name="Novoselov S.V."/>
            <person name="Paulsen I.T."/>
            <person name="Pazour G.J."/>
            <person name="Purton S."/>
            <person name="Ral J.P."/>
            <person name="Riano-Pachon D.M."/>
            <person name="Riekhof W."/>
            <person name="Rymarquis L."/>
            <person name="Schroda M."/>
            <person name="Stern D."/>
            <person name="Umen J."/>
            <person name="Willows R."/>
            <person name="Wilson N."/>
            <person name="Zimmer S.L."/>
            <person name="Allmer J."/>
            <person name="Balk J."/>
            <person name="Bisova K."/>
            <person name="Chen C.J."/>
            <person name="Elias M."/>
            <person name="Gendler K."/>
            <person name="Hauser C."/>
            <person name="Lamb M.R."/>
            <person name="Ledford H."/>
            <person name="Long J.C."/>
            <person name="Minagawa J."/>
            <person name="Page M.D."/>
            <person name="Pan J."/>
            <person name="Pootakham W."/>
            <person name="Roje S."/>
            <person name="Rose A."/>
            <person name="Stahlberg E."/>
            <person name="Terauchi A.M."/>
            <person name="Yang P."/>
            <person name="Ball S."/>
            <person name="Bowler C."/>
            <person name="Dieckmann C.L."/>
            <person name="Gladyshev V.N."/>
            <person name="Green P."/>
            <person name="Jorgensen R."/>
            <person name="Mayfield S."/>
            <person name="Mueller-Roeber B."/>
            <person name="Rajamani S."/>
            <person name="Sayre R.T."/>
            <person name="Brokstein P."/>
            <person name="Dubchak I."/>
            <person name="Goodstein D."/>
            <person name="Hornick L."/>
            <person name="Huang Y.W."/>
            <person name="Jhaveri J."/>
            <person name="Luo Y."/>
            <person name="Martinez D."/>
            <person name="Ngau W.C."/>
            <person name="Otillar B."/>
            <person name="Poliakov A."/>
            <person name="Porter A."/>
            <person name="Szajkowski L."/>
            <person name="Werner G."/>
            <person name="Zhou K."/>
            <person name="Grigoriev I.V."/>
            <person name="Rokhsar D.S."/>
            <person name="Grossman A.R."/>
        </authorList>
    </citation>
    <scope>NUCLEOTIDE SEQUENCE [LARGE SCALE GENOMIC DNA]</scope>
    <source>
        <strain>CC-503</strain>
    </source>
</reference>
<comment type="function">
    <text evidence="4">Na(+)/sulfate cotransporter with a probable high-affinity for sulfate and a proteasome dependent turnover.</text>
</comment>
<comment type="subcellular location">
    <subcellularLocation>
        <location evidence="4">Cell membrane</location>
        <topology evidence="4">Multi-pass membrane protein</topology>
    </subcellularLocation>
</comment>
<comment type="induction">
    <text evidence="4">Up-regulated by sulfur deprivation.</text>
</comment>
<comment type="disruption phenotype">
    <text evidence="4">No effect on sulfate uptake, due to the redundancy with SLT1 and SULTR2. Slt1 and slt2, as well as slt1 and sultr2 double mutants show a 50% decline in uptake while the slt1, slt2 and sultr2 triple mutant exhibits no increase in sulfate uptake capacity when deprived of sulfur. Modified regulation of the SLT3 gene that becomes up-regulated by sulfur deprivation instead of down-regulated as in wild-type.</text>
</comment>
<comment type="similarity">
    <text evidence="5">Belongs to the divalent anion:Na+ symporter (DASS) superfamily. Na+/sulfate symporter (TC 2.A.47.4) family.</text>
</comment>
<comment type="sequence caution" evidence="5">
    <conflict type="erroneous gene model prediction">
        <sequence resource="EMBL-CDS" id="EDP05750"/>
    </conflict>
</comment>
<evidence type="ECO:0000255" key="1"/>
<evidence type="ECO:0000255" key="2">
    <source>
        <dbReference type="PROSITE-ProRule" id="PRU00544"/>
    </source>
</evidence>
<evidence type="ECO:0000256" key="3">
    <source>
        <dbReference type="SAM" id="MobiDB-lite"/>
    </source>
</evidence>
<evidence type="ECO:0000269" key="4">
    <source>
    </source>
</evidence>
<evidence type="ECO:0000305" key="5"/>
<name>SLT2_CHLRE</name>
<sequence>MGFGWQGSVSIAFTALAFVVMAADWVGPDVTFTVLLAFLTAFDGQIVTVAKAAAGYGNTGLLTVIFLYWVAEGITQTGGLELIMNFVLGRSRSVHWALARSMFPVMCLSAFLNNTPCVTFMIPILISWGRRCGVPIKKLLIPLSYASVLGGTCTSIGTSTNLVIVGLQDARYTKAKQLDQAKFQIFDIAPYGVPYALWGFVFILLTQAFLLPGNSSRYAKDLLIAVRVLPSSSVAKKKLKDSGLLQQSGFSVSGIYRDGKYLSKPDPNWVLEPNDILYAAGEFDVVEFVGEEFGLGLVNADAETSAERPFTTGEESVFTPTGGAPYQKLVQATIAPTSDLIGRTVREVSWQGRFGLIPVAIQRGNGREDGRLNDVVLAAGDVLILDTTPFYDEEREDSKNNFAGKVRAVKDGAAKEFVVGVKVKKSSEVVNKTVSAAGLRGIPGLFVLSVDRADGSSVEASDYLYKIQPDDTIWIATDIGAVGFLAKFPGLELVQQEQVDKTGTSILYRHLVQAAVSHKGPIVGKTVRDVRFRTLYNAAVVAVHREGARVPLKVQDIVLQGGDVLLISCHTNWADEHRHDKSFVLLQPVPDSSPPKRSRMVIGVLLATGMVLTQIVGGLKSREYIHLWPAAVLTSALMLLTGCMNADQARKAIYWDVYLTIAAAFGVSAALEGTGVAASFANGIISIGKNLHSDGAALIAIYIATAMLSELLTNNAAGAIMYPIAAIAGDALKISPKETSVAIMLGASAGFINPFSYQCNLMVYAAGNYSVREFAIIGAPFQIWLMIVAGFILCYMKEWHQVWIVSWICTAGIVLLPALYFLLPTKVQLRIDAFFDRVAQTLNPKLIIERRNSIRRQASRTGSDGTGSSDSPRALGVPKVITA</sequence>
<feature type="chain" id="PRO_0000417125" description="Sodium/sulfate cotransporter 2">
    <location>
        <begin position="1"/>
        <end position="883"/>
    </location>
</feature>
<feature type="transmembrane region" description="Helical" evidence="1">
    <location>
        <begin position="3"/>
        <end position="23"/>
    </location>
</feature>
<feature type="transmembrane region" description="Helical" evidence="1">
    <location>
        <begin position="30"/>
        <end position="50"/>
    </location>
</feature>
<feature type="transmembrane region" description="Helical" evidence="1">
    <location>
        <begin position="60"/>
        <end position="80"/>
    </location>
</feature>
<feature type="transmembrane region" description="Helical" evidence="1">
    <location>
        <begin position="106"/>
        <end position="126"/>
    </location>
</feature>
<feature type="transmembrane region" description="Helical" evidence="1">
    <location>
        <begin position="139"/>
        <end position="159"/>
    </location>
</feature>
<feature type="transmembrane region" description="Helical" evidence="1">
    <location>
        <begin position="185"/>
        <end position="205"/>
    </location>
</feature>
<feature type="transmembrane region" description="Helical" evidence="1">
    <location>
        <begin position="600"/>
        <end position="620"/>
    </location>
</feature>
<feature type="transmembrane region" description="Helical" evidence="1">
    <location>
        <begin position="624"/>
        <end position="644"/>
    </location>
</feature>
<feature type="transmembrane region" description="Helical" evidence="1">
    <location>
        <begin position="657"/>
        <end position="677"/>
    </location>
</feature>
<feature type="transmembrane region" description="Helical" evidence="1">
    <location>
        <begin position="693"/>
        <end position="713"/>
    </location>
</feature>
<feature type="transmembrane region" description="Helical" evidence="1">
    <location>
        <begin position="774"/>
        <end position="794"/>
    </location>
</feature>
<feature type="transmembrane region" description="Helical" evidence="1">
    <location>
        <begin position="802"/>
        <end position="822"/>
    </location>
</feature>
<feature type="domain" description="RCK C-terminal 1" evidence="2">
    <location>
        <begin position="211"/>
        <end position="295"/>
    </location>
</feature>
<feature type="domain" description="RCK C-terminal 2" evidence="2">
    <location>
        <begin position="317"/>
        <end position="401"/>
    </location>
</feature>
<feature type="domain" description="RCK C-terminal 3" evidence="2">
    <location>
        <begin position="406"/>
        <end position="491"/>
    </location>
</feature>
<feature type="domain" description="RCK C-terminal 4" evidence="2">
    <location>
        <begin position="497"/>
        <end position="583"/>
    </location>
</feature>
<feature type="region of interest" description="Disordered" evidence="3">
    <location>
        <begin position="857"/>
        <end position="883"/>
    </location>
</feature>
<feature type="compositionally biased region" description="Low complexity" evidence="3">
    <location>
        <begin position="861"/>
        <end position="871"/>
    </location>
</feature>
<organism>
    <name type="scientific">Chlamydomonas reinhardtii</name>
    <name type="common">Chlamydomonas smithii</name>
    <dbReference type="NCBI Taxonomy" id="3055"/>
    <lineage>
        <taxon>Eukaryota</taxon>
        <taxon>Viridiplantae</taxon>
        <taxon>Chlorophyta</taxon>
        <taxon>core chlorophytes</taxon>
        <taxon>Chlorophyceae</taxon>
        <taxon>CS clade</taxon>
        <taxon>Chlamydomonadales</taxon>
        <taxon>Chlamydomonadaceae</taxon>
        <taxon>Chlamydomonas</taxon>
    </lineage>
</organism>
<gene>
    <name type="primary">SLT2</name>
    <name type="ORF">CHLREDRAFT_205501</name>
</gene>
<protein>
    <recommendedName>
        <fullName>Sodium/sulfate cotransporter 2</fullName>
    </recommendedName>
    <alternativeName>
        <fullName>SAC1-like transporter 2</fullName>
        <shortName>CrSLT2</shortName>
    </alternativeName>
</protein>
<accession>D2K6F1</accession>
<accession>A8IHV5</accession>
<proteinExistence type="evidence at transcript level"/>
<dbReference type="EMBL" id="GU181276">
    <property type="protein sequence ID" value="ACZ63169.1"/>
    <property type="molecule type" value="mRNA"/>
</dbReference>
<dbReference type="EMBL" id="DS496117">
    <property type="protein sequence ID" value="EDP05750.1"/>
    <property type="status" value="ALT_SEQ"/>
    <property type="molecule type" value="Genomic_DNA"/>
</dbReference>
<dbReference type="TCDB" id="2.A.47.4.4">
    <property type="family name" value="the divalent anion:na(+) symporter (dass) family"/>
</dbReference>
<dbReference type="PaxDb" id="3055-EDP05750"/>
<dbReference type="EnsemblPlants" id="PNW77626">
    <property type="protein sequence ID" value="PNW77626"/>
    <property type="gene ID" value="CHLRE_10g445000v5"/>
</dbReference>
<dbReference type="EnsemblPlants" id="PNW77627">
    <property type="protein sequence ID" value="PNW77627"/>
    <property type="gene ID" value="CHLRE_10g445000v5"/>
</dbReference>
<dbReference type="Gramene" id="PNW77626">
    <property type="protein sequence ID" value="PNW77626"/>
    <property type="gene ID" value="CHLRE_10g445000v5"/>
</dbReference>
<dbReference type="Gramene" id="PNW77627">
    <property type="protein sequence ID" value="PNW77627"/>
    <property type="gene ID" value="CHLRE_10g445000v5"/>
</dbReference>
<dbReference type="eggNOG" id="ENOG502QPZM">
    <property type="taxonomic scope" value="Eukaryota"/>
</dbReference>
<dbReference type="OMA" id="PRCFAMC"/>
<dbReference type="OrthoDB" id="442352at2759"/>
<dbReference type="GO" id="GO:0005886">
    <property type="term" value="C:plasma membrane"/>
    <property type="evidence" value="ECO:0000314"/>
    <property type="project" value="UniProtKB"/>
</dbReference>
<dbReference type="GO" id="GO:0008324">
    <property type="term" value="F:monoatomic cation transmembrane transporter activity"/>
    <property type="evidence" value="ECO:0007669"/>
    <property type="project" value="InterPro"/>
</dbReference>
<dbReference type="GO" id="GO:0015116">
    <property type="term" value="F:sulfate transmembrane transporter activity"/>
    <property type="evidence" value="ECO:0000315"/>
    <property type="project" value="UniProtKB"/>
</dbReference>
<dbReference type="GO" id="GO:0015293">
    <property type="term" value="F:symporter activity"/>
    <property type="evidence" value="ECO:0007669"/>
    <property type="project" value="UniProtKB-KW"/>
</dbReference>
<dbReference type="GO" id="GO:0006813">
    <property type="term" value="P:potassium ion transport"/>
    <property type="evidence" value="ECO:0007669"/>
    <property type="project" value="InterPro"/>
</dbReference>
<dbReference type="FunFam" id="3.30.70.1450:FF:000009">
    <property type="entry name" value="SLC13 family permease"/>
    <property type="match status" value="2"/>
</dbReference>
<dbReference type="Gene3D" id="3.30.70.1450">
    <property type="entry name" value="Regulator of K+ conductance, C-terminal domain"/>
    <property type="match status" value="4"/>
</dbReference>
<dbReference type="InterPro" id="IPR004680">
    <property type="entry name" value="Cit_transptr-like_dom"/>
</dbReference>
<dbReference type="InterPro" id="IPR051679">
    <property type="entry name" value="DASS-Related_Transporters"/>
</dbReference>
<dbReference type="InterPro" id="IPR006037">
    <property type="entry name" value="RCK_C"/>
</dbReference>
<dbReference type="InterPro" id="IPR036721">
    <property type="entry name" value="RCK_C_sf"/>
</dbReference>
<dbReference type="PANTHER" id="PTHR43652">
    <property type="entry name" value="BASIC AMINO ACID ANTIPORTER YFCC-RELATED"/>
    <property type="match status" value="1"/>
</dbReference>
<dbReference type="PANTHER" id="PTHR43652:SF9">
    <property type="entry name" value="RCK C-TERMINAL DOMAIN-CONTAINING PROTEIN"/>
    <property type="match status" value="1"/>
</dbReference>
<dbReference type="Pfam" id="PF03600">
    <property type="entry name" value="CitMHS"/>
    <property type="match status" value="1"/>
</dbReference>
<dbReference type="Pfam" id="PF02080">
    <property type="entry name" value="TrkA_C"/>
    <property type="match status" value="4"/>
</dbReference>
<dbReference type="SUPFAM" id="SSF116726">
    <property type="entry name" value="TrkA C-terminal domain-like"/>
    <property type="match status" value="4"/>
</dbReference>
<dbReference type="PROSITE" id="PS51202">
    <property type="entry name" value="RCK_C"/>
    <property type="match status" value="4"/>
</dbReference>